<evidence type="ECO:0000250" key="1">
    <source>
        <dbReference type="UniProtKB" id="Q65148"/>
    </source>
</evidence>
<evidence type="ECO:0000255" key="2">
    <source>
        <dbReference type="PROSITE-ProRule" id="PRU00946"/>
    </source>
</evidence>
<evidence type="ECO:0000305" key="3"/>
<dbReference type="EC" id="2.1.1.-"/>
<dbReference type="EMBL" id="AY261360">
    <property type="status" value="NOT_ANNOTATED_CDS"/>
    <property type="molecule type" value="Genomic_DNA"/>
</dbReference>
<dbReference type="SMR" id="P0C968"/>
<dbReference type="Proteomes" id="UP000000861">
    <property type="component" value="Segment"/>
</dbReference>
<dbReference type="GO" id="GO:0044423">
    <property type="term" value="C:virion component"/>
    <property type="evidence" value="ECO:0007669"/>
    <property type="project" value="UniProtKB-KW"/>
</dbReference>
<dbReference type="GO" id="GO:0004483">
    <property type="term" value="F:mRNA (nucleoside-2'-O-)-methyltransferase activity"/>
    <property type="evidence" value="ECO:0007669"/>
    <property type="project" value="TreeGrafter"/>
</dbReference>
<dbReference type="GO" id="GO:0006370">
    <property type="term" value="P:7-methylguanosine mRNA capping"/>
    <property type="evidence" value="ECO:0007669"/>
    <property type="project" value="UniProtKB-ARBA"/>
</dbReference>
<dbReference type="GO" id="GO:0032259">
    <property type="term" value="P:methylation"/>
    <property type="evidence" value="ECO:0007669"/>
    <property type="project" value="UniProtKB-KW"/>
</dbReference>
<dbReference type="Gene3D" id="3.40.50.12760">
    <property type="match status" value="1"/>
</dbReference>
<dbReference type="InterPro" id="IPR025807">
    <property type="entry name" value="Adrift-typ_MeTrfase"/>
</dbReference>
<dbReference type="InterPro" id="IPR050851">
    <property type="entry name" value="mRNA_Cap_2O-Ribose_MeTrfase"/>
</dbReference>
<dbReference type="InterPro" id="IPR002877">
    <property type="entry name" value="RNA_MeTrfase_FtsJ_dom"/>
</dbReference>
<dbReference type="InterPro" id="IPR029063">
    <property type="entry name" value="SAM-dependent_MTases_sf"/>
</dbReference>
<dbReference type="PANTHER" id="PTHR16121">
    <property type="entry name" value="CAP-SPECIFIC MRNA (NUCLEOSIDE-2'-O-)-METHYLTRANSFERASE 1-RELATED"/>
    <property type="match status" value="1"/>
</dbReference>
<dbReference type="Pfam" id="PF01728">
    <property type="entry name" value="FtsJ"/>
    <property type="match status" value="1"/>
</dbReference>
<dbReference type="SUPFAM" id="SSF53335">
    <property type="entry name" value="S-adenosyl-L-methionine-dependent methyltransferases"/>
    <property type="match status" value="1"/>
</dbReference>
<dbReference type="PROSITE" id="PS51614">
    <property type="entry name" value="SAM_MT_ADRIFT"/>
    <property type="match status" value="1"/>
</dbReference>
<organismHost>
    <name type="scientific">Ornithodoros</name>
    <name type="common">relapsing fever ticks</name>
    <dbReference type="NCBI Taxonomy" id="6937"/>
</organismHost>
<organismHost>
    <name type="scientific">Phacochoerus aethiopicus</name>
    <name type="common">Warthog</name>
    <dbReference type="NCBI Taxonomy" id="85517"/>
</organismHost>
<organismHost>
    <name type="scientific">Phacochoerus africanus</name>
    <name type="common">Warthog</name>
    <dbReference type="NCBI Taxonomy" id="41426"/>
</organismHost>
<organismHost>
    <name type="scientific">Potamochoerus larvatus</name>
    <name type="common">Bushpig</name>
    <dbReference type="NCBI Taxonomy" id="273792"/>
</organismHost>
<organismHost>
    <name type="scientific">Sus scrofa</name>
    <name type="common">Pig</name>
    <dbReference type="NCBI Taxonomy" id="9823"/>
</organismHost>
<gene>
    <name type="ordered locus">Ken-067</name>
</gene>
<organism>
    <name type="scientific">African swine fever virus (isolate Pig/Kenya/KEN-50/1950)</name>
    <name type="common">ASFV</name>
    <dbReference type="NCBI Taxonomy" id="561445"/>
    <lineage>
        <taxon>Viruses</taxon>
        <taxon>Varidnaviria</taxon>
        <taxon>Bamfordvirae</taxon>
        <taxon>Nucleocytoviricota</taxon>
        <taxon>Pokkesviricetes</taxon>
        <taxon>Asfuvirales</taxon>
        <taxon>Asfarviridae</taxon>
        <taxon>Asfivirus</taxon>
        <taxon>African swine fever virus</taxon>
    </lineage>
</organism>
<protein>
    <recommendedName>
        <fullName>Probable methyltransferase EP424R</fullName>
        <shortName>pEP424R</shortName>
        <ecNumber>2.1.1.-</ecNumber>
    </recommendedName>
</protein>
<proteinExistence type="inferred from homology"/>
<keyword id="KW-0244">Early protein</keyword>
<keyword id="KW-0489">Methyltransferase</keyword>
<keyword id="KW-0949">S-adenosyl-L-methionine</keyword>
<keyword id="KW-0808">Transferase</keyword>
<keyword id="KW-0946">Virion</keyword>
<feature type="chain" id="PRO_0000373067" description="Probable methyltransferase EP424R">
    <location>
        <begin position="1"/>
        <end position="424"/>
    </location>
</feature>
<feature type="domain" description="Adrift-type SAM-dependent 2'-O-MTase" evidence="2">
    <location>
        <begin position="103"/>
        <end position="315"/>
    </location>
</feature>
<feature type="active site" description="Proton acceptor" evidence="2">
    <location>
        <position position="268"/>
    </location>
</feature>
<feature type="binding site" evidence="2">
    <location>
        <position position="135"/>
    </location>
    <ligand>
        <name>S-adenosyl-L-methionine</name>
        <dbReference type="ChEBI" id="CHEBI:59789"/>
    </ligand>
</feature>
<feature type="binding site" evidence="2">
    <location>
        <position position="228"/>
    </location>
    <ligand>
        <name>S-adenosyl-L-methionine</name>
        <dbReference type="ChEBI" id="CHEBI:59789"/>
    </ligand>
</feature>
<comment type="subcellular location">
    <subcellularLocation>
        <location evidence="1">Virion</location>
    </subcellularLocation>
</comment>
<comment type="induction">
    <text evidence="3">Expressed in the early phase of the viral replicative cycle.</text>
</comment>
<reference key="1">
    <citation type="submission" date="2003-03" db="EMBL/GenBank/DDBJ databases">
        <title>African swine fever virus genomes.</title>
        <authorList>
            <person name="Kutish G.F."/>
            <person name="Rock D.L."/>
        </authorList>
    </citation>
    <scope>NUCLEOTIDE SEQUENCE [LARGE SCALE GENOMIC DNA]</scope>
</reference>
<sequence length="424" mass="49337">MSNYYYYYGGGRYDWLKTVEPTNFLKIGLPYQAHPLHLQHQATTPPSILEKFKRADILLNEVKSEMDPLMLQPETEKKLYQVLGSIDMFKGLRKKVEYTYNAQIVTNAWLKMYELLNTMNFNNTSQAFCNCELPGGFISAINHFNHTMMHYPTFNWVASSLYPSSETDALEDHYGLYQCNPDNWLMQSPLLKKNMDYNNGDVTIASNVKNLALKATQKLTPIHLYTADGGINVGHDYNKQEELNLKLHFGQALTGLLSLSKGGNMILKHYTLNHAFTLSLICVFSHFFEELYITKPTSSRPSNSETYIVGKNRLRLFTPKEEQVLLKRLEFFNDTPLVDLSLYQNLLESIYFAVETIHLKQQIEFLNFGMKCYRHFYNKIKLLNEYLAPKKKIFQDRWRVLNKLYVLEKKHKLKLCTSFQGSVA</sequence>
<accession>P0C968</accession>
<name>VF424_ASFK5</name>